<gene>
    <name evidence="1" type="primary">dapD</name>
    <name type="ordered locus">SCH_0213</name>
</gene>
<keyword id="KW-0012">Acyltransferase</keyword>
<keyword id="KW-0028">Amino-acid biosynthesis</keyword>
<keyword id="KW-0963">Cytoplasm</keyword>
<keyword id="KW-0220">Diaminopimelate biosynthesis</keyword>
<keyword id="KW-0457">Lysine biosynthesis</keyword>
<keyword id="KW-0677">Repeat</keyword>
<keyword id="KW-0808">Transferase</keyword>
<name>DAPD_SALCH</name>
<feature type="chain" id="PRO_0000196966" description="2,3,4,5-tetrahydropyridine-2,6-dicarboxylate N-succinyltransferase">
    <location>
        <begin position="1"/>
        <end position="274"/>
    </location>
</feature>
<feature type="binding site" evidence="1">
    <location>
        <position position="104"/>
    </location>
    <ligand>
        <name>substrate</name>
    </ligand>
</feature>
<feature type="binding site" evidence="1">
    <location>
        <position position="141"/>
    </location>
    <ligand>
        <name>substrate</name>
    </ligand>
</feature>
<proteinExistence type="inferred from homology"/>
<comment type="catalytic activity">
    <reaction evidence="1">
        <text>(S)-2,3,4,5-tetrahydrodipicolinate + succinyl-CoA + H2O = (S)-2-succinylamino-6-oxoheptanedioate + CoA</text>
        <dbReference type="Rhea" id="RHEA:17325"/>
        <dbReference type="ChEBI" id="CHEBI:15377"/>
        <dbReference type="ChEBI" id="CHEBI:15685"/>
        <dbReference type="ChEBI" id="CHEBI:16845"/>
        <dbReference type="ChEBI" id="CHEBI:57287"/>
        <dbReference type="ChEBI" id="CHEBI:57292"/>
        <dbReference type="EC" id="2.3.1.117"/>
    </reaction>
</comment>
<comment type="pathway">
    <text evidence="1">Amino-acid biosynthesis; L-lysine biosynthesis via DAP pathway; LL-2,6-diaminopimelate from (S)-tetrahydrodipicolinate (succinylase route): step 1/3.</text>
</comment>
<comment type="subunit">
    <text evidence="1">Homotrimer.</text>
</comment>
<comment type="subcellular location">
    <subcellularLocation>
        <location evidence="1">Cytoplasm</location>
    </subcellularLocation>
</comment>
<comment type="similarity">
    <text evidence="1">Belongs to the transferase hexapeptide repeat family.</text>
</comment>
<organism>
    <name type="scientific">Salmonella choleraesuis (strain SC-B67)</name>
    <dbReference type="NCBI Taxonomy" id="321314"/>
    <lineage>
        <taxon>Bacteria</taxon>
        <taxon>Pseudomonadati</taxon>
        <taxon>Pseudomonadota</taxon>
        <taxon>Gammaproteobacteria</taxon>
        <taxon>Enterobacterales</taxon>
        <taxon>Enterobacteriaceae</taxon>
        <taxon>Salmonella</taxon>
    </lineage>
</organism>
<dbReference type="EC" id="2.3.1.117" evidence="1"/>
<dbReference type="EMBL" id="AE017220">
    <property type="protein sequence ID" value="AAX64119.1"/>
    <property type="molecule type" value="Genomic_DNA"/>
</dbReference>
<dbReference type="RefSeq" id="WP_001186670.1">
    <property type="nucleotide sequence ID" value="NC_006905.1"/>
</dbReference>
<dbReference type="SMR" id="Q57T42"/>
<dbReference type="KEGG" id="sec:SCH_0213"/>
<dbReference type="HOGENOM" id="CLU_050859_0_1_6"/>
<dbReference type="UniPathway" id="UPA00034">
    <property type="reaction ID" value="UER00019"/>
</dbReference>
<dbReference type="Proteomes" id="UP000000538">
    <property type="component" value="Chromosome"/>
</dbReference>
<dbReference type="GO" id="GO:0005737">
    <property type="term" value="C:cytoplasm"/>
    <property type="evidence" value="ECO:0007669"/>
    <property type="project" value="UniProtKB-SubCell"/>
</dbReference>
<dbReference type="GO" id="GO:0008666">
    <property type="term" value="F:2,3,4,5-tetrahydropyridine-2,6-dicarboxylate N-succinyltransferase activity"/>
    <property type="evidence" value="ECO:0007669"/>
    <property type="project" value="UniProtKB-UniRule"/>
</dbReference>
<dbReference type="GO" id="GO:0016779">
    <property type="term" value="F:nucleotidyltransferase activity"/>
    <property type="evidence" value="ECO:0007669"/>
    <property type="project" value="TreeGrafter"/>
</dbReference>
<dbReference type="GO" id="GO:0019877">
    <property type="term" value="P:diaminopimelate biosynthetic process"/>
    <property type="evidence" value="ECO:0007669"/>
    <property type="project" value="UniProtKB-UniRule"/>
</dbReference>
<dbReference type="GO" id="GO:0009089">
    <property type="term" value="P:lysine biosynthetic process via diaminopimelate"/>
    <property type="evidence" value="ECO:0007669"/>
    <property type="project" value="UniProtKB-UniRule"/>
</dbReference>
<dbReference type="CDD" id="cd03350">
    <property type="entry name" value="LbH_THP_succinylT"/>
    <property type="match status" value="1"/>
</dbReference>
<dbReference type="FunFam" id="2.160.10.10:FF:000004">
    <property type="entry name" value="2,3,4,5-tetrahydropyridine-2,6-dicarboxylate N-succinyltransferase"/>
    <property type="match status" value="1"/>
</dbReference>
<dbReference type="Gene3D" id="2.160.10.10">
    <property type="entry name" value="Hexapeptide repeat proteins"/>
    <property type="match status" value="1"/>
</dbReference>
<dbReference type="Gene3D" id="1.10.166.10">
    <property type="entry name" value="Tetrahydrodipicolinate-N-succinyltransferase, N-terminal domain"/>
    <property type="match status" value="1"/>
</dbReference>
<dbReference type="HAMAP" id="MF_00811">
    <property type="entry name" value="DapD"/>
    <property type="match status" value="1"/>
</dbReference>
<dbReference type="InterPro" id="IPR005664">
    <property type="entry name" value="DapD_Trfase_Hexpep_rpt_fam"/>
</dbReference>
<dbReference type="InterPro" id="IPR001451">
    <property type="entry name" value="Hexapep"/>
</dbReference>
<dbReference type="InterPro" id="IPR018357">
    <property type="entry name" value="Hexapep_transf_CS"/>
</dbReference>
<dbReference type="InterPro" id="IPR023180">
    <property type="entry name" value="THP_succinylTrfase_dom1"/>
</dbReference>
<dbReference type="InterPro" id="IPR037133">
    <property type="entry name" value="THP_succinylTrfase_N_sf"/>
</dbReference>
<dbReference type="InterPro" id="IPR011004">
    <property type="entry name" value="Trimer_LpxA-like_sf"/>
</dbReference>
<dbReference type="NCBIfam" id="TIGR00965">
    <property type="entry name" value="dapD"/>
    <property type="match status" value="1"/>
</dbReference>
<dbReference type="NCBIfam" id="NF008808">
    <property type="entry name" value="PRK11830.1"/>
    <property type="match status" value="1"/>
</dbReference>
<dbReference type="PANTHER" id="PTHR19136:SF52">
    <property type="entry name" value="2,3,4,5-TETRAHYDROPYRIDINE-2,6-DICARBOXYLATE N-SUCCINYLTRANSFERASE"/>
    <property type="match status" value="1"/>
</dbReference>
<dbReference type="PANTHER" id="PTHR19136">
    <property type="entry name" value="MOLYBDENUM COFACTOR GUANYLYLTRANSFERASE"/>
    <property type="match status" value="1"/>
</dbReference>
<dbReference type="Pfam" id="PF14602">
    <property type="entry name" value="Hexapep_2"/>
    <property type="match status" value="1"/>
</dbReference>
<dbReference type="Pfam" id="PF14805">
    <property type="entry name" value="THDPS_N_2"/>
    <property type="match status" value="1"/>
</dbReference>
<dbReference type="SUPFAM" id="SSF51161">
    <property type="entry name" value="Trimeric LpxA-like enzymes"/>
    <property type="match status" value="1"/>
</dbReference>
<dbReference type="PROSITE" id="PS00101">
    <property type="entry name" value="HEXAPEP_TRANSFERASES"/>
    <property type="match status" value="1"/>
</dbReference>
<sequence>MQQLQNVIETAFERRADITPANVDTVTREAVKQVISLLDSGALRVAEKIDGQWVTHQWLKKAVLLSFRINDNQVIDGAESRYFDKVPMKFADYDEARFQKEGFRVVPPAAVRQGAFIARNTVLMPSYVNIGAYVDEGTMVDTWATVGSCAQIGKNVHLSGGVGIGGVLEPLQANPTIIEDNCFIGARSEVVEGVIVEEGSVISMGVYLGQSTKIYDRETGEVHYGRVPAGSVVVSGNLPSKDGKYSLYCAVIVKKVDAKTRGKVGINELLRTID</sequence>
<reference key="1">
    <citation type="journal article" date="2005" name="Nucleic Acids Res.">
        <title>The genome sequence of Salmonella enterica serovar Choleraesuis, a highly invasive and resistant zoonotic pathogen.</title>
        <authorList>
            <person name="Chiu C.-H."/>
            <person name="Tang P."/>
            <person name="Chu C."/>
            <person name="Hu S."/>
            <person name="Bao Q."/>
            <person name="Yu J."/>
            <person name="Chou Y.-Y."/>
            <person name="Wang H.-S."/>
            <person name="Lee Y.-S."/>
        </authorList>
    </citation>
    <scope>NUCLEOTIDE SEQUENCE [LARGE SCALE GENOMIC DNA]</scope>
    <source>
        <strain>SC-B67</strain>
    </source>
</reference>
<accession>Q57T42</accession>
<evidence type="ECO:0000255" key="1">
    <source>
        <dbReference type="HAMAP-Rule" id="MF_00811"/>
    </source>
</evidence>
<protein>
    <recommendedName>
        <fullName evidence="1">2,3,4,5-tetrahydropyridine-2,6-dicarboxylate N-succinyltransferase</fullName>
        <ecNumber evidence="1">2.3.1.117</ecNumber>
    </recommendedName>
    <alternativeName>
        <fullName evidence="1">Tetrahydrodipicolinate N-succinyltransferase</fullName>
        <shortName evidence="1">THDP succinyltransferase</shortName>
        <shortName evidence="1">THP succinyltransferase</shortName>
        <shortName evidence="1">Tetrahydropicolinate succinylase</shortName>
    </alternativeName>
</protein>